<proteinExistence type="evidence at protein level"/>
<dbReference type="EMBL" id="M64097">
    <property type="protein sequence ID" value="AAA32408.1"/>
    <property type="molecule type" value="Genomic_DNA"/>
</dbReference>
<dbReference type="EMBL" id="AF083977">
    <property type="protein sequence ID" value="AAF01094.1"/>
    <property type="molecule type" value="Genomic_DNA"/>
</dbReference>
<dbReference type="RefSeq" id="NP_050621.1">
    <property type="nucleotide sequence ID" value="NC_000929.1"/>
</dbReference>
<dbReference type="PDB" id="1RR7">
    <property type="method" value="X-ray"/>
    <property type="resolution" value="2.20 A"/>
    <property type="chains" value="A=1-129"/>
</dbReference>
<dbReference type="PDBsum" id="1RR7"/>
<dbReference type="SMR" id="P23848"/>
<dbReference type="GeneID" id="2636272"/>
<dbReference type="KEGG" id="vg:2636272"/>
<dbReference type="EvolutionaryTrace" id="P23848"/>
<dbReference type="Proteomes" id="UP000002611">
    <property type="component" value="Genome"/>
</dbReference>
<dbReference type="Proteomes" id="UP000401936">
    <property type="component" value="Segment"/>
</dbReference>
<dbReference type="GO" id="GO:0030430">
    <property type="term" value="C:host cell cytoplasm"/>
    <property type="evidence" value="ECO:0007669"/>
    <property type="project" value="UniProtKB-SubCell"/>
</dbReference>
<dbReference type="GO" id="GO:0003677">
    <property type="term" value="F:DNA binding"/>
    <property type="evidence" value="ECO:0007669"/>
    <property type="project" value="UniProtKB-KW"/>
</dbReference>
<dbReference type="Gene3D" id="1.10.10.60">
    <property type="entry name" value="Homeodomain-like"/>
    <property type="match status" value="2"/>
</dbReference>
<dbReference type="InterPro" id="IPR052411">
    <property type="entry name" value="c-mor_Regulatory_Protein"/>
</dbReference>
<dbReference type="InterPro" id="IPR009057">
    <property type="entry name" value="Homeodomain-like_sf"/>
</dbReference>
<dbReference type="InterPro" id="IPR014875">
    <property type="entry name" value="Mor_transcription_activator"/>
</dbReference>
<dbReference type="PANTHER" id="PTHR37812">
    <property type="entry name" value="MU-LIKE PROPHAGE FLUMU PROTEIN C"/>
    <property type="match status" value="1"/>
</dbReference>
<dbReference type="PANTHER" id="PTHR37812:SF1">
    <property type="entry name" value="MU-LIKE PROPHAGE FLUMU PROTEIN C"/>
    <property type="match status" value="1"/>
</dbReference>
<dbReference type="Pfam" id="PF08765">
    <property type="entry name" value="Mor"/>
    <property type="match status" value="1"/>
</dbReference>
<dbReference type="SUPFAM" id="SSF46689">
    <property type="entry name" value="Homeodomain-like"/>
    <property type="match status" value="1"/>
</dbReference>
<accession>P23848</accession>
<organism>
    <name type="scientific">Escherichia phage Mu</name>
    <name type="common">Bacteriophage Mu</name>
    <dbReference type="NCBI Taxonomy" id="2681603"/>
    <lineage>
        <taxon>Viruses</taxon>
        <taxon>Duplodnaviria</taxon>
        <taxon>Heunggongvirae</taxon>
        <taxon>Uroviricota</taxon>
        <taxon>Caudoviricetes</taxon>
        <taxon>Muvirus</taxon>
        <taxon>Muvirus mu</taxon>
    </lineage>
</organism>
<evidence type="ECO:0000255" key="1"/>
<evidence type="ECO:0000269" key="2">
    <source>
    </source>
</evidence>
<evidence type="ECO:0000269" key="3">
    <source>
    </source>
</evidence>
<evidence type="ECO:0000269" key="4">
    <source>
    </source>
</evidence>
<evidence type="ECO:0000269" key="5">
    <source>
    </source>
</evidence>
<evidence type="ECO:0000305" key="6"/>
<evidence type="ECO:0000305" key="7">
    <source>
    </source>
</evidence>
<evidence type="ECO:0007829" key="8">
    <source>
        <dbReference type="PDB" id="1RR7"/>
    </source>
</evidence>
<organismHost>
    <name type="scientific">Enterobacteriaceae</name>
    <dbReference type="NCBI Taxonomy" id="543"/>
</organismHost>
<protein>
    <recommendedName>
        <fullName>Middle operon regulator</fullName>
        <shortName>Mor</shortName>
    </recommendedName>
    <alternativeName>
        <fullName>GemB</fullName>
    </alternativeName>
    <alternativeName>
        <fullName>Gene product 17</fullName>
        <shortName>gp17</shortName>
    </alternativeName>
</protein>
<name>MOR_BPMU</name>
<feature type="chain" id="PRO_0000062803" description="Middle operon regulator">
    <location>
        <begin position="1"/>
        <end position="129"/>
    </location>
</feature>
<feature type="DNA-binding region" description="H-T-H motif" evidence="1">
    <location>
        <begin position="94"/>
        <end position="114"/>
    </location>
</feature>
<feature type="region of interest" description="Dimerization">
    <location>
        <begin position="28"/>
        <end position="64"/>
    </location>
</feature>
<feature type="region of interest" description="DNA-binding">
    <location>
        <begin position="77"/>
        <end position="129"/>
    </location>
</feature>
<feature type="mutagenesis site" description="Complete loss of DNA-binding and transcription activation ability." evidence="4">
    <original>G</original>
    <variation>M</variation>
    <variation>N</variation>
    <variation>R</variation>
    <variation>T</variation>
    <variation>V</variation>
    <location>
        <position position="65"/>
    </location>
</feature>
<feature type="mutagenesis site" description="Complete loss of DNA-binding and transcription activation ability." evidence="4">
    <original>G</original>
    <variation>A</variation>
    <variation>H</variation>
    <variation>L</variation>
    <variation>P</variation>
    <variation>R</variation>
    <location>
        <position position="66"/>
    </location>
</feature>
<feature type="mutagenesis site" description="Complete loss of DNA-binding and transcription activation ability." evidence="4">
    <original>Q</original>
    <variation>G</variation>
    <variation>F</variation>
    <variation>I</variation>
    <variation>L</variation>
    <variation>K</variation>
    <variation>P</variation>
    <variation>R</variation>
    <location>
        <position position="68"/>
    </location>
</feature>
<feature type="mutagenesis site" description="Complete loss of DNA-binding and transcription activation ability." evidence="4">
    <original>Y</original>
    <variation>G</variation>
    <variation>I</variation>
    <variation>R</variation>
    <variation>S</variation>
    <variation>V</variation>
    <location>
        <position position="70"/>
    </location>
</feature>
<feature type="mutagenesis site" description="Partial loss of DNA-binding and transcription activation ability." evidence="4">
    <original>G</original>
    <variation>F</variation>
    <variation>W</variation>
    <location>
        <position position="74"/>
    </location>
</feature>
<feature type="mutagenesis site" description="Partial loss of DNA-binding and transcription activation ability." evidence="4">
    <original>G</original>
    <variation>I</variation>
    <variation>S</variation>
    <variation>T</variation>
    <variation>Y</variation>
    <location>
        <position position="74"/>
    </location>
</feature>
<feature type="mutagenesis site" description="Complete loss of DNA-binding and transcription activation ability." evidence="4">
    <original>G</original>
    <variation>R</variation>
    <location>
        <position position="74"/>
    </location>
</feature>
<feature type="helix" evidence="8">
    <location>
        <begin position="28"/>
        <end position="45"/>
    </location>
</feature>
<feature type="helix" evidence="8">
    <location>
        <begin position="53"/>
        <end position="64"/>
    </location>
</feature>
<feature type="helix" evidence="8">
    <location>
        <begin position="75"/>
        <end position="89"/>
    </location>
</feature>
<feature type="helix" evidence="8">
    <location>
        <begin position="95"/>
        <end position="102"/>
    </location>
</feature>
<feature type="helix" evidence="8">
    <location>
        <begin position="106"/>
        <end position="118"/>
    </location>
</feature>
<gene>
    <name type="primary">mor</name>
    <name type="ordered locus">Mup17</name>
</gene>
<comment type="function">
    <text evidence="3 5">Activator of the Pm promoter, which controls middle genes expression. Activation of Pm allows expression of protein C necessary for late gene expression. In addition to Mor binding, activation of Pm might require the interaction of Mor with the C-terminus of host RNAP subunits RpoA and RpoH.</text>
</comment>
<comment type="subunit">
    <text evidence="2 4">Homodimer.</text>
</comment>
<comment type="subcellular location">
    <subcellularLocation>
        <location evidence="6">Host cytoplasm</location>
    </subcellularLocation>
</comment>
<comment type="induction">
    <text evidence="7">This protein is constitively expressed from the Pgem promoter unlike most other early proteins which are expressed under the control of the Pe promoter. Its expression seems to escape repression by repressor protein c and thus could occur throughout latency (Probable).</text>
</comment>
<comment type="domain">
    <text>The dimerization domain in the N-terminus and the DNA-binding domain in the C-terminus are connected by a linker containing a beta-strand.</text>
</comment>
<comment type="similarity">
    <text evidence="6">Belongs to the c/mor transcriptional regulatory family.</text>
</comment>
<reference key="1">
    <citation type="journal article" date="1990" name="J. Bacteriol.">
        <title>Identification of a positive regulator of the Mu middle operon.</title>
        <authorList>
            <person name="Mathee K."/>
            <person name="Howe M.M."/>
        </authorList>
    </citation>
    <scope>NUCLEOTIDE SEQUENCE [GENOMIC DNA]</scope>
</reference>
<reference key="2">
    <citation type="book" date="1987" name="Phage Mu">
        <title>Sequence of the left end of Mu.</title>
        <editorList>
            <person name="Symonds N."/>
            <person name="Toussaint A."/>
            <person name="van de Putte P."/>
            <person name="Howe M.M."/>
        </editorList>
        <authorList>
            <person name="Priess H."/>
            <person name="Brauer B."/>
            <person name="Schmidt C."/>
            <person name="Kamp D."/>
        </authorList>
    </citation>
    <scope>NUCLEOTIDE SEQUENCE [GENOMIC DNA]</scope>
</reference>
<reference key="3">
    <citation type="journal article" date="2002" name="J. Mol. Biol.">
        <title>Bacteriophage Mu genome sequence: analysis and comparison with Mu-like prophages in Haemophilus, Neisseria and Deinococcus.</title>
        <authorList>
            <person name="Morgan G.J."/>
            <person name="Hatfull G.F."/>
            <person name="Casjens S."/>
            <person name="Hendrix R.W."/>
        </authorList>
    </citation>
    <scope>NUCLEOTIDE SEQUENCE [LARGE SCALE GENOMIC DNA]</scope>
</reference>
<reference key="4">
    <citation type="journal article" date="1990" name="Virology">
        <title>The bacteriophage Mu gem gene: a positive regulator of the C operon required for normal levels of late transcription.</title>
        <authorList>
            <person name="Giusti M."/>
            <person name="Di Lallo G."/>
            <person name="Ghelardini P."/>
            <person name="Paolozzi L."/>
        </authorList>
    </citation>
    <scope>FUNCTION</scope>
</reference>
<reference key="5">
    <citation type="journal article" date="1994" name="Genetica">
        <title>The Mu gem operon: its role in gene expression, recombination and cell cycle.</title>
        <authorList>
            <person name="Ghelardini P."/>
            <person name="La Valle R."/>
            <person name="Paolozzi L."/>
        </authorList>
    </citation>
    <scope>REVIEW</scope>
</reference>
<reference key="6">
    <citation type="journal article" date="1996" name="Proc. Natl. Acad. Sci. U.S.A.">
        <title>Distortion in the spacer region of Pm during activation of middle transcription of phage Mu.</title>
        <authorList>
            <person name="Artsimovitch I."/>
            <person name="Kahmeyer-Gabbe M."/>
            <person name="Howe M.M."/>
        </authorList>
    </citation>
    <scope>FUNCTION</scope>
</reference>
<reference key="7">
    <citation type="journal article" date="1998" name="Virology">
        <title>Regulation of the bacteriophage Mu gem operon.</title>
        <authorList>
            <person name="Fabozzi G."/>
            <person name="Paolozzi L."/>
            <person name="Ghelardini P."/>
        </authorList>
    </citation>
    <scope>INDUCTION</scope>
</reference>
<reference key="8">
    <citation type="journal article" date="2011" name="J. Biol. Chem.">
        <title>Genetic analysis of phage Mu Mor protein amino acids involved in DNA minor groove binding and conformational changes.</title>
        <authorList>
            <person name="Kumaraswami M."/>
            <person name="Avanigadda L."/>
            <person name="Rai R."/>
            <person name="Park H.W."/>
            <person name="Howe M.M."/>
        </authorList>
    </citation>
    <scope>DNA-BINDING</scope>
    <scope>SUBUNIT</scope>
    <scope>DIMERIZATION DOMAIN</scope>
    <scope>MUTAGENESIS OF GLY-65; GLY-66; GLN-68; TYR-70 AND GLY-74</scope>
</reference>
<reference key="9">
    <citation type="journal article" date="2004" name="J. Biol. Chem.">
        <title>Crystal structure of the Mor protein of bacteriophage Mu, a member of the Mor/C family of transcription activators.</title>
        <authorList>
            <person name="Kumaraswami M."/>
            <person name="Howe M.M."/>
            <person name="Park H.W."/>
        </authorList>
    </citation>
    <scope>X-RAY CRYSTALLOGRAPHY (2.2 ANGSTROMS)</scope>
    <scope>DNA-BINDING</scope>
    <scope>SUBUNIT</scope>
</reference>
<sequence length="129" mass="14714">MTEDLFGDLQDDTILAHLDNPAEDTSRFPALLAELNDLLRGELSRLGVDPAHSLEIVVAICKHLGGGQVYIPRGQALDSLIRDLRIWNDFNGRNVSELTTRYGVTFNTVYKAIRRMRRLKYRQYQPSLL</sequence>
<keyword id="KW-0002">3D-structure</keyword>
<keyword id="KW-0010">Activator</keyword>
<keyword id="KW-0238">DNA-binding</keyword>
<keyword id="KW-0244">Early protein</keyword>
<keyword id="KW-1035">Host cytoplasm</keyword>
<keyword id="KW-1185">Reference proteome</keyword>
<keyword id="KW-0804">Transcription</keyword>
<keyword id="KW-0805">Transcription regulation</keyword>